<reference key="1">
    <citation type="journal article" date="2006" name="Proc. Natl. Acad. Sci. U.S.A.">
        <title>The complete genome sequence of Lactobacillus bulgaricus reveals extensive and ongoing reductive evolution.</title>
        <authorList>
            <person name="van de Guchte M."/>
            <person name="Penaud S."/>
            <person name="Grimaldi C."/>
            <person name="Barbe V."/>
            <person name="Bryson K."/>
            <person name="Nicolas P."/>
            <person name="Robert C."/>
            <person name="Oztas S."/>
            <person name="Mangenot S."/>
            <person name="Couloux A."/>
            <person name="Loux V."/>
            <person name="Dervyn R."/>
            <person name="Bossy R."/>
            <person name="Bolotin A."/>
            <person name="Batto J.-M."/>
            <person name="Walunas T."/>
            <person name="Gibrat J.-F."/>
            <person name="Bessieres P."/>
            <person name="Weissenbach J."/>
            <person name="Ehrlich S.D."/>
            <person name="Maguin E."/>
        </authorList>
    </citation>
    <scope>NUCLEOTIDE SEQUENCE [LARGE SCALE GENOMIC DNA]</scope>
    <source>
        <strain>ATCC 11842 / DSM 20081 / BCRC 10696 / JCM 1002 / NBRC 13953 / NCIMB 11778 / NCTC 12712 / WDCM 00102 / Lb 14</strain>
    </source>
</reference>
<accession>Q1GBP7</accession>
<dbReference type="EC" id="2.7.8.7" evidence="1"/>
<dbReference type="EMBL" id="CR954253">
    <property type="protein sequence ID" value="CAI97197.1"/>
    <property type="molecule type" value="Genomic_DNA"/>
</dbReference>
<dbReference type="RefSeq" id="WP_011543627.1">
    <property type="nucleotide sequence ID" value="NC_008054.1"/>
</dbReference>
<dbReference type="SMR" id="Q1GBP7"/>
<dbReference type="STRING" id="390333.Ldb0359"/>
<dbReference type="KEGG" id="ldb:Ldb0359"/>
<dbReference type="PATRIC" id="fig|390333.13.peg.429"/>
<dbReference type="eggNOG" id="COG0736">
    <property type="taxonomic scope" value="Bacteria"/>
</dbReference>
<dbReference type="HOGENOM" id="CLU_089696_1_2_9"/>
<dbReference type="BioCyc" id="LDEL390333:LDB_RS01510-MONOMER"/>
<dbReference type="Proteomes" id="UP000001259">
    <property type="component" value="Chromosome"/>
</dbReference>
<dbReference type="GO" id="GO:0005737">
    <property type="term" value="C:cytoplasm"/>
    <property type="evidence" value="ECO:0007669"/>
    <property type="project" value="UniProtKB-SubCell"/>
</dbReference>
<dbReference type="GO" id="GO:0008897">
    <property type="term" value="F:holo-[acyl-carrier-protein] synthase activity"/>
    <property type="evidence" value="ECO:0007669"/>
    <property type="project" value="UniProtKB-UniRule"/>
</dbReference>
<dbReference type="GO" id="GO:0000287">
    <property type="term" value="F:magnesium ion binding"/>
    <property type="evidence" value="ECO:0007669"/>
    <property type="project" value="UniProtKB-UniRule"/>
</dbReference>
<dbReference type="GO" id="GO:0006633">
    <property type="term" value="P:fatty acid biosynthetic process"/>
    <property type="evidence" value="ECO:0007669"/>
    <property type="project" value="UniProtKB-UniRule"/>
</dbReference>
<dbReference type="Gene3D" id="3.90.470.20">
    <property type="entry name" value="4'-phosphopantetheinyl transferase domain"/>
    <property type="match status" value="1"/>
</dbReference>
<dbReference type="HAMAP" id="MF_00101">
    <property type="entry name" value="AcpS"/>
    <property type="match status" value="1"/>
</dbReference>
<dbReference type="InterPro" id="IPR008278">
    <property type="entry name" value="4-PPantetheinyl_Trfase_dom"/>
</dbReference>
<dbReference type="InterPro" id="IPR037143">
    <property type="entry name" value="4-PPantetheinyl_Trfase_dom_sf"/>
</dbReference>
<dbReference type="InterPro" id="IPR002582">
    <property type="entry name" value="ACPS"/>
</dbReference>
<dbReference type="InterPro" id="IPR004568">
    <property type="entry name" value="Ppantetheine-prot_Trfase_dom"/>
</dbReference>
<dbReference type="NCBIfam" id="TIGR00516">
    <property type="entry name" value="acpS"/>
    <property type="match status" value="1"/>
</dbReference>
<dbReference type="NCBIfam" id="TIGR00556">
    <property type="entry name" value="pantethn_trn"/>
    <property type="match status" value="1"/>
</dbReference>
<dbReference type="Pfam" id="PF01648">
    <property type="entry name" value="ACPS"/>
    <property type="match status" value="1"/>
</dbReference>
<dbReference type="SUPFAM" id="SSF56214">
    <property type="entry name" value="4'-phosphopantetheinyl transferase"/>
    <property type="match status" value="1"/>
</dbReference>
<keyword id="KW-0963">Cytoplasm</keyword>
<keyword id="KW-0275">Fatty acid biosynthesis</keyword>
<keyword id="KW-0276">Fatty acid metabolism</keyword>
<keyword id="KW-0444">Lipid biosynthesis</keyword>
<keyword id="KW-0443">Lipid metabolism</keyword>
<keyword id="KW-0460">Magnesium</keyword>
<keyword id="KW-0479">Metal-binding</keyword>
<keyword id="KW-1185">Reference proteome</keyword>
<keyword id="KW-0808">Transferase</keyword>
<protein>
    <recommendedName>
        <fullName evidence="1">Holo-[acyl-carrier-protein] synthase</fullName>
        <shortName evidence="1">Holo-ACP synthase</shortName>
        <ecNumber evidence="1">2.7.8.7</ecNumber>
    </recommendedName>
    <alternativeName>
        <fullName evidence="1">4'-phosphopantetheinyl transferase AcpS</fullName>
    </alternativeName>
</protein>
<name>ACPS_LACDA</name>
<evidence type="ECO:0000255" key="1">
    <source>
        <dbReference type="HAMAP-Rule" id="MF_00101"/>
    </source>
</evidence>
<feature type="chain" id="PRO_1000008438" description="Holo-[acyl-carrier-protein] synthase">
    <location>
        <begin position="1"/>
        <end position="137"/>
    </location>
</feature>
<feature type="binding site" evidence="1">
    <location>
        <position position="8"/>
    </location>
    <ligand>
        <name>Mg(2+)</name>
        <dbReference type="ChEBI" id="CHEBI:18420"/>
    </ligand>
</feature>
<feature type="binding site" evidence="1">
    <location>
        <position position="58"/>
    </location>
    <ligand>
        <name>Mg(2+)</name>
        <dbReference type="ChEBI" id="CHEBI:18420"/>
    </ligand>
</feature>
<sequence>MIKNIGVDQIEVDRIAKVVDRGDGFARKVLTDREFAQYQDLTHKRKIEYLGGRFAIKEAFSKAWGTGIGQAVSFEDVETLRTESGAPVTTSRIFTGRIFSSIAHDDHEIVAVVVLEEPAGWRRAIGKLLHLLSGRKK</sequence>
<comment type="function">
    <text evidence="1">Transfers the 4'-phosphopantetheine moiety from coenzyme A to a Ser of acyl-carrier-protein.</text>
</comment>
<comment type="catalytic activity">
    <reaction evidence="1">
        <text>apo-[ACP] + CoA = holo-[ACP] + adenosine 3',5'-bisphosphate + H(+)</text>
        <dbReference type="Rhea" id="RHEA:12068"/>
        <dbReference type="Rhea" id="RHEA-COMP:9685"/>
        <dbReference type="Rhea" id="RHEA-COMP:9690"/>
        <dbReference type="ChEBI" id="CHEBI:15378"/>
        <dbReference type="ChEBI" id="CHEBI:29999"/>
        <dbReference type="ChEBI" id="CHEBI:57287"/>
        <dbReference type="ChEBI" id="CHEBI:58343"/>
        <dbReference type="ChEBI" id="CHEBI:64479"/>
        <dbReference type="EC" id="2.7.8.7"/>
    </reaction>
</comment>
<comment type="cofactor">
    <cofactor evidence="1">
        <name>Mg(2+)</name>
        <dbReference type="ChEBI" id="CHEBI:18420"/>
    </cofactor>
</comment>
<comment type="subcellular location">
    <subcellularLocation>
        <location evidence="1">Cytoplasm</location>
    </subcellularLocation>
</comment>
<comment type="similarity">
    <text evidence="1">Belongs to the P-Pant transferase superfamily. AcpS family.</text>
</comment>
<organism>
    <name type="scientific">Lactobacillus delbrueckii subsp. bulgaricus (strain ATCC 11842 / DSM 20081 / BCRC 10696 / JCM 1002 / NBRC 13953 / NCIMB 11778 / NCTC 12712 / WDCM 00102 / Lb 14)</name>
    <dbReference type="NCBI Taxonomy" id="390333"/>
    <lineage>
        <taxon>Bacteria</taxon>
        <taxon>Bacillati</taxon>
        <taxon>Bacillota</taxon>
        <taxon>Bacilli</taxon>
        <taxon>Lactobacillales</taxon>
        <taxon>Lactobacillaceae</taxon>
        <taxon>Lactobacillus</taxon>
    </lineage>
</organism>
<proteinExistence type="inferred from homology"/>
<gene>
    <name evidence="1" type="primary">acpS</name>
    <name type="ordered locus">Ldb0359</name>
</gene>